<dbReference type="EC" id="4.3.3.6" evidence="1"/>
<dbReference type="EC" id="3.5.1.2" evidence="1"/>
<dbReference type="EMBL" id="CP000686">
    <property type="protein sequence ID" value="ABQ91596.1"/>
    <property type="molecule type" value="Genomic_DNA"/>
</dbReference>
<dbReference type="RefSeq" id="WP_011957940.1">
    <property type="nucleotide sequence ID" value="NC_009523.1"/>
</dbReference>
<dbReference type="SMR" id="A5UY93"/>
<dbReference type="STRING" id="357808.RoseRS_3235"/>
<dbReference type="KEGG" id="rrs:RoseRS_3235"/>
<dbReference type="eggNOG" id="COG0311">
    <property type="taxonomic scope" value="Bacteria"/>
</dbReference>
<dbReference type="HOGENOM" id="CLU_069674_2_0_0"/>
<dbReference type="OrthoDB" id="9810320at2"/>
<dbReference type="UniPathway" id="UPA00245"/>
<dbReference type="Proteomes" id="UP000006554">
    <property type="component" value="Chromosome"/>
</dbReference>
<dbReference type="GO" id="GO:0005829">
    <property type="term" value="C:cytosol"/>
    <property type="evidence" value="ECO:0007669"/>
    <property type="project" value="TreeGrafter"/>
</dbReference>
<dbReference type="GO" id="GO:1903600">
    <property type="term" value="C:glutaminase complex"/>
    <property type="evidence" value="ECO:0007669"/>
    <property type="project" value="TreeGrafter"/>
</dbReference>
<dbReference type="GO" id="GO:0004359">
    <property type="term" value="F:glutaminase activity"/>
    <property type="evidence" value="ECO:0007669"/>
    <property type="project" value="UniProtKB-UniRule"/>
</dbReference>
<dbReference type="GO" id="GO:0036381">
    <property type="term" value="F:pyridoxal 5'-phosphate synthase (glutamine hydrolysing) activity"/>
    <property type="evidence" value="ECO:0007669"/>
    <property type="project" value="UniProtKB-UniRule"/>
</dbReference>
<dbReference type="GO" id="GO:0006543">
    <property type="term" value="P:glutamine catabolic process"/>
    <property type="evidence" value="ECO:0007669"/>
    <property type="project" value="UniProtKB-UniRule"/>
</dbReference>
<dbReference type="GO" id="GO:0042823">
    <property type="term" value="P:pyridoxal phosphate biosynthetic process"/>
    <property type="evidence" value="ECO:0007669"/>
    <property type="project" value="UniProtKB-UniRule"/>
</dbReference>
<dbReference type="GO" id="GO:0008614">
    <property type="term" value="P:pyridoxine metabolic process"/>
    <property type="evidence" value="ECO:0007669"/>
    <property type="project" value="TreeGrafter"/>
</dbReference>
<dbReference type="CDD" id="cd01749">
    <property type="entry name" value="GATase1_PB"/>
    <property type="match status" value="1"/>
</dbReference>
<dbReference type="FunFam" id="3.40.50.880:FF:000010">
    <property type="entry name" value="uncharacterized protein LOC100176842 isoform X2"/>
    <property type="match status" value="1"/>
</dbReference>
<dbReference type="Gene3D" id="3.40.50.880">
    <property type="match status" value="1"/>
</dbReference>
<dbReference type="HAMAP" id="MF_01615">
    <property type="entry name" value="PdxT"/>
    <property type="match status" value="1"/>
</dbReference>
<dbReference type="InterPro" id="IPR029062">
    <property type="entry name" value="Class_I_gatase-like"/>
</dbReference>
<dbReference type="InterPro" id="IPR002161">
    <property type="entry name" value="PdxT/SNO"/>
</dbReference>
<dbReference type="InterPro" id="IPR021196">
    <property type="entry name" value="PdxT/SNO_CS"/>
</dbReference>
<dbReference type="NCBIfam" id="TIGR03800">
    <property type="entry name" value="PLP_synth_Pdx2"/>
    <property type="match status" value="1"/>
</dbReference>
<dbReference type="PANTHER" id="PTHR31559">
    <property type="entry name" value="PYRIDOXAL 5'-PHOSPHATE SYNTHASE SUBUNIT SNO"/>
    <property type="match status" value="1"/>
</dbReference>
<dbReference type="PANTHER" id="PTHR31559:SF0">
    <property type="entry name" value="PYRIDOXAL 5'-PHOSPHATE SYNTHASE SUBUNIT SNO1-RELATED"/>
    <property type="match status" value="1"/>
</dbReference>
<dbReference type="Pfam" id="PF01174">
    <property type="entry name" value="SNO"/>
    <property type="match status" value="1"/>
</dbReference>
<dbReference type="PIRSF" id="PIRSF005639">
    <property type="entry name" value="Glut_amidoT_SNO"/>
    <property type="match status" value="1"/>
</dbReference>
<dbReference type="SUPFAM" id="SSF52317">
    <property type="entry name" value="Class I glutamine amidotransferase-like"/>
    <property type="match status" value="1"/>
</dbReference>
<dbReference type="PROSITE" id="PS01236">
    <property type="entry name" value="PDXT_SNO_1"/>
    <property type="match status" value="1"/>
</dbReference>
<dbReference type="PROSITE" id="PS51130">
    <property type="entry name" value="PDXT_SNO_2"/>
    <property type="match status" value="1"/>
</dbReference>
<reference key="1">
    <citation type="submission" date="2007-04" db="EMBL/GenBank/DDBJ databases">
        <title>Complete sequence of Roseiflexus sp. RS-1.</title>
        <authorList>
            <consortium name="US DOE Joint Genome Institute"/>
            <person name="Copeland A."/>
            <person name="Lucas S."/>
            <person name="Lapidus A."/>
            <person name="Barry K."/>
            <person name="Detter J.C."/>
            <person name="Glavina del Rio T."/>
            <person name="Hammon N."/>
            <person name="Israni S."/>
            <person name="Dalin E."/>
            <person name="Tice H."/>
            <person name="Pitluck S."/>
            <person name="Chertkov O."/>
            <person name="Brettin T."/>
            <person name="Bruce D."/>
            <person name="Han C."/>
            <person name="Schmutz J."/>
            <person name="Larimer F."/>
            <person name="Land M."/>
            <person name="Hauser L."/>
            <person name="Kyrpides N."/>
            <person name="Mikhailova N."/>
            <person name="Bryant D.A."/>
            <person name="Richardson P."/>
        </authorList>
    </citation>
    <scope>NUCLEOTIDE SEQUENCE [LARGE SCALE GENOMIC DNA]</scope>
    <source>
        <strain>RS-1</strain>
    </source>
</reference>
<sequence length="189" mass="21011">MTVGILALQGDFREHEEMLRRIGAPTLQVRLPKHLQHVERLIIPGGESTTIGKLLAMYGLIDPLRARIRDGMPVWGTCAGAILLAQRIADGRADQPSLRLMDVTARRNAFGSQLESFEVDLPVLGLGDEPLRMVFIRAPVLEDLGRDVTPLAHLDDGRVVAARQGTMLATCFHPELTPDERMHRYFLAM</sequence>
<proteinExistence type="inferred from homology"/>
<evidence type="ECO:0000255" key="1">
    <source>
        <dbReference type="HAMAP-Rule" id="MF_01615"/>
    </source>
</evidence>
<gene>
    <name evidence="1" type="primary">pdxT</name>
    <name type="ordered locus">RoseRS_3235</name>
</gene>
<name>PDXT_ROSS1</name>
<feature type="chain" id="PRO_1000069468" description="Pyridoxal 5'-phosphate synthase subunit PdxT">
    <location>
        <begin position="1"/>
        <end position="189"/>
    </location>
</feature>
<feature type="active site" description="Nucleophile" evidence="1">
    <location>
        <position position="78"/>
    </location>
</feature>
<feature type="active site" description="Charge relay system" evidence="1">
    <location>
        <position position="173"/>
    </location>
</feature>
<feature type="active site" description="Charge relay system" evidence="1">
    <location>
        <position position="175"/>
    </location>
</feature>
<feature type="binding site" evidence="1">
    <location>
        <begin position="46"/>
        <end position="48"/>
    </location>
    <ligand>
        <name>L-glutamine</name>
        <dbReference type="ChEBI" id="CHEBI:58359"/>
    </ligand>
</feature>
<feature type="binding site" evidence="1">
    <location>
        <position position="107"/>
    </location>
    <ligand>
        <name>L-glutamine</name>
        <dbReference type="ChEBI" id="CHEBI:58359"/>
    </ligand>
</feature>
<feature type="binding site" evidence="1">
    <location>
        <begin position="136"/>
        <end position="137"/>
    </location>
    <ligand>
        <name>L-glutamine</name>
        <dbReference type="ChEBI" id="CHEBI:58359"/>
    </ligand>
</feature>
<keyword id="KW-0315">Glutamine amidotransferase</keyword>
<keyword id="KW-0378">Hydrolase</keyword>
<keyword id="KW-0456">Lyase</keyword>
<keyword id="KW-0663">Pyridoxal phosphate</keyword>
<comment type="function">
    <text evidence="1">Catalyzes the hydrolysis of glutamine to glutamate and ammonia as part of the biosynthesis of pyridoxal 5'-phosphate. The resulting ammonia molecule is channeled to the active site of PdxS.</text>
</comment>
<comment type="catalytic activity">
    <reaction evidence="1">
        <text>aldehydo-D-ribose 5-phosphate + D-glyceraldehyde 3-phosphate + L-glutamine = pyridoxal 5'-phosphate + L-glutamate + phosphate + 3 H2O + H(+)</text>
        <dbReference type="Rhea" id="RHEA:31507"/>
        <dbReference type="ChEBI" id="CHEBI:15377"/>
        <dbReference type="ChEBI" id="CHEBI:15378"/>
        <dbReference type="ChEBI" id="CHEBI:29985"/>
        <dbReference type="ChEBI" id="CHEBI:43474"/>
        <dbReference type="ChEBI" id="CHEBI:58273"/>
        <dbReference type="ChEBI" id="CHEBI:58359"/>
        <dbReference type="ChEBI" id="CHEBI:59776"/>
        <dbReference type="ChEBI" id="CHEBI:597326"/>
        <dbReference type="EC" id="4.3.3.6"/>
    </reaction>
</comment>
<comment type="catalytic activity">
    <reaction evidence="1">
        <text>L-glutamine + H2O = L-glutamate + NH4(+)</text>
        <dbReference type="Rhea" id="RHEA:15889"/>
        <dbReference type="ChEBI" id="CHEBI:15377"/>
        <dbReference type="ChEBI" id="CHEBI:28938"/>
        <dbReference type="ChEBI" id="CHEBI:29985"/>
        <dbReference type="ChEBI" id="CHEBI:58359"/>
        <dbReference type="EC" id="3.5.1.2"/>
    </reaction>
</comment>
<comment type="pathway">
    <text evidence="1">Cofactor biosynthesis; pyridoxal 5'-phosphate biosynthesis.</text>
</comment>
<comment type="subunit">
    <text evidence="1">In the presence of PdxS, forms a dodecamer of heterodimers. Only shows activity in the heterodimer.</text>
</comment>
<comment type="similarity">
    <text evidence="1">Belongs to the glutaminase PdxT/SNO family.</text>
</comment>
<protein>
    <recommendedName>
        <fullName evidence="1">Pyridoxal 5'-phosphate synthase subunit PdxT</fullName>
        <ecNumber evidence="1">4.3.3.6</ecNumber>
    </recommendedName>
    <alternativeName>
        <fullName evidence="1">Pdx2</fullName>
    </alternativeName>
    <alternativeName>
        <fullName evidence="1">Pyridoxal 5'-phosphate synthase glutaminase subunit</fullName>
        <ecNumber evidence="1">3.5.1.2</ecNumber>
    </alternativeName>
</protein>
<accession>A5UY93</accession>
<organism>
    <name type="scientific">Roseiflexus sp. (strain RS-1)</name>
    <dbReference type="NCBI Taxonomy" id="357808"/>
    <lineage>
        <taxon>Bacteria</taxon>
        <taxon>Bacillati</taxon>
        <taxon>Chloroflexota</taxon>
        <taxon>Chloroflexia</taxon>
        <taxon>Chloroflexales</taxon>
        <taxon>Roseiflexineae</taxon>
        <taxon>Roseiflexaceae</taxon>
        <taxon>Roseiflexus</taxon>
    </lineage>
</organism>